<organism>
    <name type="scientific">Canis lupus familiaris</name>
    <name type="common">Dog</name>
    <name type="synonym">Canis familiaris</name>
    <dbReference type="NCBI Taxonomy" id="9615"/>
    <lineage>
        <taxon>Eukaryota</taxon>
        <taxon>Metazoa</taxon>
        <taxon>Chordata</taxon>
        <taxon>Craniata</taxon>
        <taxon>Vertebrata</taxon>
        <taxon>Euteleostomi</taxon>
        <taxon>Mammalia</taxon>
        <taxon>Eutheria</taxon>
        <taxon>Laurasiatheria</taxon>
        <taxon>Carnivora</taxon>
        <taxon>Caniformia</taxon>
        <taxon>Canidae</taxon>
        <taxon>Canis</taxon>
    </lineage>
</organism>
<reference key="1">
    <citation type="submission" date="2005-02" db="EMBL/GenBank/DDBJ databases">
        <authorList>
            <person name="Engberg S."/>
            <person name="Drmota T."/>
        </authorList>
    </citation>
    <scope>NUCLEOTIDE SEQUENCE [MRNA]</scope>
</reference>
<accession>Q5DUB3</accession>
<dbReference type="EMBL" id="AJ884915">
    <property type="protein sequence ID" value="CAI58656.1"/>
    <property type="molecule type" value="mRNA"/>
</dbReference>
<dbReference type="RefSeq" id="NP_001012637.1">
    <property type="nucleotide sequence ID" value="NM_001012619.1"/>
</dbReference>
<dbReference type="BMRB" id="Q5DUB3"/>
<dbReference type="SMR" id="Q5DUB3"/>
<dbReference type="FunCoup" id="Q5DUB3">
    <property type="interactions" value="168"/>
</dbReference>
<dbReference type="STRING" id="9615.ENSCAFP00000012041"/>
<dbReference type="ChEMBL" id="CHEMBL5303554"/>
<dbReference type="GlyCosmos" id="Q5DUB3">
    <property type="glycosylation" value="2 sites, No reported glycans"/>
</dbReference>
<dbReference type="PaxDb" id="9612-ENSCAFP00000012041"/>
<dbReference type="Ensembl" id="ENSCAFT00030032971.1">
    <property type="protein sequence ID" value="ENSCAFP00030028765.1"/>
    <property type="gene ID" value="ENSCAFG00030017843.1"/>
</dbReference>
<dbReference type="Ensembl" id="ENSCAFT00040012681.1">
    <property type="protein sequence ID" value="ENSCAFP00040010993.1"/>
    <property type="gene ID" value="ENSCAFG00040006803.1"/>
</dbReference>
<dbReference type="Ensembl" id="ENSCAFT00845029508.1">
    <property type="protein sequence ID" value="ENSCAFP00845023180.1"/>
    <property type="gene ID" value="ENSCAFG00845016647.1"/>
</dbReference>
<dbReference type="GeneID" id="403815"/>
<dbReference type="KEGG" id="cfa:403815"/>
<dbReference type="CTD" id="6869"/>
<dbReference type="VEuPathDB" id="HostDB:ENSCAFG00845016647"/>
<dbReference type="VGNC" id="VGNC:47066">
    <property type="gene designation" value="TACR1"/>
</dbReference>
<dbReference type="eggNOG" id="KOG4219">
    <property type="taxonomic scope" value="Eukaryota"/>
</dbReference>
<dbReference type="GeneTree" id="ENSGT00940000153745"/>
<dbReference type="InParanoid" id="Q5DUB3"/>
<dbReference type="OrthoDB" id="5981855at2759"/>
<dbReference type="Reactome" id="R-CFA-380095">
    <property type="pathway name" value="Tachykinin receptors bind tachykinins"/>
</dbReference>
<dbReference type="Reactome" id="R-CFA-416476">
    <property type="pathway name" value="G alpha (q) signalling events"/>
</dbReference>
<dbReference type="Reactome" id="R-CFA-8856825">
    <property type="pathway name" value="Cargo recognition for clathrin-mediated endocytosis"/>
</dbReference>
<dbReference type="Reactome" id="R-CFA-8856828">
    <property type="pathway name" value="Clathrin-mediated endocytosis"/>
</dbReference>
<dbReference type="Proteomes" id="UP000002254">
    <property type="component" value="Unplaced"/>
</dbReference>
<dbReference type="Proteomes" id="UP000694429">
    <property type="component" value="Chromosome 17"/>
</dbReference>
<dbReference type="Proteomes" id="UP000694542">
    <property type="component" value="Chromosome 17"/>
</dbReference>
<dbReference type="Proteomes" id="UP000805418">
    <property type="component" value="Chromosome 17"/>
</dbReference>
<dbReference type="GO" id="GO:0005886">
    <property type="term" value="C:plasma membrane"/>
    <property type="evidence" value="ECO:0000318"/>
    <property type="project" value="GO_Central"/>
</dbReference>
<dbReference type="GO" id="GO:0061827">
    <property type="term" value="C:sperm head"/>
    <property type="evidence" value="ECO:0007669"/>
    <property type="project" value="Ensembl"/>
</dbReference>
<dbReference type="GO" id="GO:0097225">
    <property type="term" value="C:sperm midpiece"/>
    <property type="evidence" value="ECO:0000318"/>
    <property type="project" value="GO_Central"/>
</dbReference>
<dbReference type="GO" id="GO:0016496">
    <property type="term" value="F:substance P receptor activity"/>
    <property type="evidence" value="ECO:0000318"/>
    <property type="project" value="GO_Central"/>
</dbReference>
<dbReference type="GO" id="GO:0007204">
    <property type="term" value="P:positive regulation of cytosolic calcium ion concentration"/>
    <property type="evidence" value="ECO:0007669"/>
    <property type="project" value="Ensembl"/>
</dbReference>
<dbReference type="GO" id="GO:1902093">
    <property type="term" value="P:positive regulation of flagellated sperm motility"/>
    <property type="evidence" value="ECO:0000318"/>
    <property type="project" value="GO_Central"/>
</dbReference>
<dbReference type="GO" id="GO:0070472">
    <property type="term" value="P:regulation of uterine smooth muscle contraction"/>
    <property type="evidence" value="ECO:0007669"/>
    <property type="project" value="Ensembl"/>
</dbReference>
<dbReference type="GO" id="GO:0048265">
    <property type="term" value="P:response to pain"/>
    <property type="evidence" value="ECO:0007669"/>
    <property type="project" value="Ensembl"/>
</dbReference>
<dbReference type="CDD" id="cd16002">
    <property type="entry name" value="7tmA_NK1R"/>
    <property type="match status" value="1"/>
</dbReference>
<dbReference type="FunFam" id="1.20.1070.10:FF:000078">
    <property type="entry name" value="Neuromedin-K receptor"/>
    <property type="match status" value="1"/>
</dbReference>
<dbReference type="Gene3D" id="1.20.1070.10">
    <property type="entry name" value="Rhodopsin 7-helix transmembrane proteins"/>
    <property type="match status" value="1"/>
</dbReference>
<dbReference type="InterPro" id="IPR000276">
    <property type="entry name" value="GPCR_Rhodpsn"/>
</dbReference>
<dbReference type="InterPro" id="IPR017452">
    <property type="entry name" value="GPCR_Rhodpsn_7TM"/>
</dbReference>
<dbReference type="InterPro" id="IPR001681">
    <property type="entry name" value="Neurokn_rcpt"/>
</dbReference>
<dbReference type="InterPro" id="IPR000046">
    <property type="entry name" value="NK1_rcpt"/>
</dbReference>
<dbReference type="PANTHER" id="PTHR46925">
    <property type="entry name" value="G-PROTEIN COUPLED RECEPTOR TKR-1-RELATED"/>
    <property type="match status" value="1"/>
</dbReference>
<dbReference type="PANTHER" id="PTHR46925:SF4">
    <property type="entry name" value="SUBSTANCE-P RECEPTOR"/>
    <property type="match status" value="1"/>
</dbReference>
<dbReference type="Pfam" id="PF00001">
    <property type="entry name" value="7tm_1"/>
    <property type="match status" value="1"/>
</dbReference>
<dbReference type="PRINTS" id="PR00237">
    <property type="entry name" value="GPCRRHODOPSN"/>
</dbReference>
<dbReference type="PRINTS" id="PR01024">
    <property type="entry name" value="NEUROKININ1R"/>
</dbReference>
<dbReference type="PRINTS" id="PR00244">
    <property type="entry name" value="NEUROKININR"/>
</dbReference>
<dbReference type="SUPFAM" id="SSF81321">
    <property type="entry name" value="Family A G protein-coupled receptor-like"/>
    <property type="match status" value="1"/>
</dbReference>
<dbReference type="PROSITE" id="PS00237">
    <property type="entry name" value="G_PROTEIN_RECEP_F1_1"/>
    <property type="match status" value="1"/>
</dbReference>
<dbReference type="PROSITE" id="PS50262">
    <property type="entry name" value="G_PROTEIN_RECEP_F1_2"/>
    <property type="match status" value="1"/>
</dbReference>
<gene>
    <name type="primary">TACR1</name>
</gene>
<comment type="function">
    <text evidence="1">This is a receptor for the tachykinin neuropeptide substance P. It is probably associated with G proteins that activate a phosphatidylinositol-calcium second messenger system (By similarity).</text>
</comment>
<comment type="subunit">
    <text evidence="1">Interacts with ARRB1.</text>
</comment>
<comment type="subcellular location">
    <subcellularLocation>
        <location>Cell membrane</location>
        <topology>Multi-pass membrane protein</topology>
    </subcellularLocation>
</comment>
<comment type="similarity">
    <text evidence="3">Belongs to the G-protein coupled receptor 1 family.</text>
</comment>
<keyword id="KW-1003">Cell membrane</keyword>
<keyword id="KW-1015">Disulfide bond</keyword>
<keyword id="KW-0297">G-protein coupled receptor</keyword>
<keyword id="KW-0325">Glycoprotein</keyword>
<keyword id="KW-0449">Lipoprotein</keyword>
<keyword id="KW-0472">Membrane</keyword>
<keyword id="KW-0564">Palmitate</keyword>
<keyword id="KW-0675">Receptor</keyword>
<keyword id="KW-1185">Reference proteome</keyword>
<keyword id="KW-0807">Transducer</keyword>
<keyword id="KW-0812">Transmembrane</keyword>
<keyword id="KW-1133">Transmembrane helix</keyword>
<evidence type="ECO:0000250" key="1"/>
<evidence type="ECO:0000255" key="2"/>
<evidence type="ECO:0000255" key="3">
    <source>
        <dbReference type="PROSITE-ProRule" id="PRU00521"/>
    </source>
</evidence>
<evidence type="ECO:0000256" key="4">
    <source>
        <dbReference type="SAM" id="MobiDB-lite"/>
    </source>
</evidence>
<sequence length="407" mass="46464">MDNVLQVDSDLFPNISTNTSEPNQFVQPAWQIVLWAAAYTVIVVTSVVGNVVVMWIILAHKRMRTVTNYFLVNLAFAEASMAAFNTVVNFTYAVHNEWYYGLFYCKFHNFFPIAAVFASIYSMTAVAFDRYMAIIHPLQPRLSATATKVVICVIWVLALLLAFPQGYYSTTETMPNRVVCMIEWPEHPNKIYEKVYHICVTVLIYFLPLLVIGYAYTVVGITLWASEIPGDSSDRYHEQVSAKRKVVKMMIVVVCTFAICWLPFHIFFLLPYINPDLYLEKFIQQVYLAIMWLAMSSTMYNPIIYCCLNDRFRLGFKHAFRCCPFISAGDYEGLEMKSTRYLQTQGSVYKVSRLETTVSTVVGAHEEELEDGPKTTPSSLDLTSNGSSRSDSKTMTESFSFYSNMLS</sequence>
<protein>
    <recommendedName>
        <fullName>Substance-P receptor</fullName>
        <shortName>SPR</shortName>
    </recommendedName>
    <alternativeName>
        <fullName>NK-1 receptor</fullName>
        <shortName>NK-1R</shortName>
    </alternativeName>
    <alternativeName>
        <fullName>Tachykinin receptor 1</fullName>
    </alternativeName>
</protein>
<feature type="chain" id="PRO_0000069883" description="Substance-P receptor">
    <location>
        <begin position="1"/>
        <end position="407"/>
    </location>
</feature>
<feature type="topological domain" description="Extracellular" evidence="2">
    <location>
        <begin position="1"/>
        <end position="31"/>
    </location>
</feature>
<feature type="transmembrane region" description="Helical; Name=1" evidence="2">
    <location>
        <begin position="32"/>
        <end position="54"/>
    </location>
</feature>
<feature type="topological domain" description="Cytoplasmic" evidence="2">
    <location>
        <begin position="55"/>
        <end position="64"/>
    </location>
</feature>
<feature type="transmembrane region" description="Helical; Name=2" evidence="2">
    <location>
        <begin position="65"/>
        <end position="86"/>
    </location>
</feature>
<feature type="topological domain" description="Extracellular" evidence="2">
    <location>
        <begin position="87"/>
        <end position="106"/>
    </location>
</feature>
<feature type="transmembrane region" description="Helical; Name=3" evidence="2">
    <location>
        <begin position="107"/>
        <end position="128"/>
    </location>
</feature>
<feature type="topological domain" description="Cytoplasmic" evidence="2">
    <location>
        <begin position="129"/>
        <end position="148"/>
    </location>
</feature>
<feature type="transmembrane region" description="Helical; Name=4" evidence="2">
    <location>
        <begin position="149"/>
        <end position="169"/>
    </location>
</feature>
<feature type="topological domain" description="Extracellular" evidence="2">
    <location>
        <begin position="170"/>
        <end position="194"/>
    </location>
</feature>
<feature type="transmembrane region" description="Helical; Name=5" evidence="2">
    <location>
        <begin position="195"/>
        <end position="219"/>
    </location>
</feature>
<feature type="topological domain" description="Cytoplasmic" evidence="2">
    <location>
        <begin position="220"/>
        <end position="248"/>
    </location>
</feature>
<feature type="transmembrane region" description="Helical; Name=6" evidence="2">
    <location>
        <begin position="249"/>
        <end position="270"/>
    </location>
</feature>
<feature type="topological domain" description="Extracellular" evidence="2">
    <location>
        <begin position="271"/>
        <end position="283"/>
    </location>
</feature>
<feature type="transmembrane region" description="Helical; Name=7" evidence="2">
    <location>
        <begin position="284"/>
        <end position="308"/>
    </location>
</feature>
<feature type="topological domain" description="Cytoplasmic" evidence="2">
    <location>
        <begin position="309"/>
        <end position="407"/>
    </location>
</feature>
<feature type="region of interest" description="Disordered" evidence="4">
    <location>
        <begin position="365"/>
        <end position="394"/>
    </location>
</feature>
<feature type="compositionally biased region" description="Polar residues" evidence="4">
    <location>
        <begin position="375"/>
        <end position="394"/>
    </location>
</feature>
<feature type="lipid moiety-binding region" description="S-palmitoyl cysteine" evidence="2">
    <location>
        <position position="322"/>
    </location>
</feature>
<feature type="glycosylation site" description="N-linked (GlcNAc...) asparagine" evidence="2">
    <location>
        <position position="14"/>
    </location>
</feature>
<feature type="glycosylation site" description="N-linked (GlcNAc...) asparagine" evidence="2">
    <location>
        <position position="18"/>
    </location>
</feature>
<feature type="disulfide bond" evidence="3">
    <location>
        <begin position="105"/>
        <end position="180"/>
    </location>
</feature>
<proteinExistence type="evidence at transcript level"/>
<name>NK1R_CANLF</name>